<proteinExistence type="inferred from homology"/>
<accession>P34769</accession>
<protein>
    <recommendedName>
        <fullName evidence="2">Large ribosomal subunit protein bL20c</fullName>
    </recommendedName>
    <alternativeName>
        <fullName>50S ribosomal protein L20, plastid</fullName>
    </alternativeName>
</protein>
<geneLocation type="non-photosynthetic plastid"/>
<reference key="1">
    <citation type="journal article" date="1994" name="Plant Physiol.">
        <title>Plastid ribosomal protein genes from the nonphotosynthetic flagellate Astasia longa.</title>
        <authorList>
            <person name="Gockel G."/>
            <person name="Baier S."/>
            <person name="Hachtel W."/>
        </authorList>
    </citation>
    <scope>NUCLEOTIDE SEQUENCE [GENOMIC DNA]</scope>
    <source>
        <strain>CCAP 1204-17a</strain>
    </source>
</reference>
<reference key="2">
    <citation type="journal article" date="2000" name="Protist">
        <title>Complete gene map of the plastid genome of the nonphotosynthetic euglenoid flagellate Astasia longa.</title>
        <authorList>
            <person name="Gockel G."/>
            <person name="Hachtel W."/>
        </authorList>
    </citation>
    <scope>NUCLEOTIDE SEQUENCE [LARGE SCALE GENOMIC DNA]</scope>
    <source>
        <strain>CCAP 1204-17a</strain>
    </source>
</reference>
<dbReference type="EMBL" id="AJ294725">
    <property type="protein sequence ID" value="CAC24590.1"/>
    <property type="molecule type" value="Genomic_DNA"/>
</dbReference>
<dbReference type="PIR" id="S38601">
    <property type="entry name" value="S38601"/>
</dbReference>
<dbReference type="RefSeq" id="NP_074979.1">
    <property type="nucleotide sequence ID" value="NC_002652.1"/>
</dbReference>
<dbReference type="SMR" id="P34769"/>
<dbReference type="GeneID" id="802497"/>
<dbReference type="GO" id="GO:0009536">
    <property type="term" value="C:plastid"/>
    <property type="evidence" value="ECO:0007669"/>
    <property type="project" value="UniProtKB-SubCell"/>
</dbReference>
<dbReference type="GO" id="GO:1990904">
    <property type="term" value="C:ribonucleoprotein complex"/>
    <property type="evidence" value="ECO:0007669"/>
    <property type="project" value="UniProtKB-KW"/>
</dbReference>
<dbReference type="GO" id="GO:0005840">
    <property type="term" value="C:ribosome"/>
    <property type="evidence" value="ECO:0007669"/>
    <property type="project" value="UniProtKB-KW"/>
</dbReference>
<dbReference type="GO" id="GO:0019843">
    <property type="term" value="F:rRNA binding"/>
    <property type="evidence" value="ECO:0007669"/>
    <property type="project" value="UniProtKB-KW"/>
</dbReference>
<dbReference type="GO" id="GO:0003735">
    <property type="term" value="F:structural constituent of ribosome"/>
    <property type="evidence" value="ECO:0007669"/>
    <property type="project" value="InterPro"/>
</dbReference>
<dbReference type="GO" id="GO:0006412">
    <property type="term" value="P:translation"/>
    <property type="evidence" value="ECO:0007669"/>
    <property type="project" value="InterPro"/>
</dbReference>
<dbReference type="CDD" id="cd07026">
    <property type="entry name" value="Ribosomal_L20"/>
    <property type="match status" value="1"/>
</dbReference>
<dbReference type="Gene3D" id="6.10.160.10">
    <property type="match status" value="1"/>
</dbReference>
<dbReference type="Gene3D" id="1.10.1900.20">
    <property type="entry name" value="Ribosomal protein L20"/>
    <property type="match status" value="1"/>
</dbReference>
<dbReference type="HAMAP" id="MF_00382">
    <property type="entry name" value="Ribosomal_bL20"/>
    <property type="match status" value="1"/>
</dbReference>
<dbReference type="InterPro" id="IPR005813">
    <property type="entry name" value="Ribosomal_bL20"/>
</dbReference>
<dbReference type="InterPro" id="IPR049946">
    <property type="entry name" value="RIBOSOMAL_L20_CS"/>
</dbReference>
<dbReference type="InterPro" id="IPR035566">
    <property type="entry name" value="Ribosomal_protein_bL20_C"/>
</dbReference>
<dbReference type="NCBIfam" id="TIGR01032">
    <property type="entry name" value="rplT_bact"/>
    <property type="match status" value="1"/>
</dbReference>
<dbReference type="PANTHER" id="PTHR10986">
    <property type="entry name" value="39S RIBOSOMAL PROTEIN L20"/>
    <property type="match status" value="1"/>
</dbReference>
<dbReference type="Pfam" id="PF00453">
    <property type="entry name" value="Ribosomal_L20"/>
    <property type="match status" value="1"/>
</dbReference>
<dbReference type="PRINTS" id="PR00062">
    <property type="entry name" value="RIBOSOMALL20"/>
</dbReference>
<dbReference type="SUPFAM" id="SSF74731">
    <property type="entry name" value="Ribosomal protein L20"/>
    <property type="match status" value="1"/>
</dbReference>
<dbReference type="PROSITE" id="PS00937">
    <property type="entry name" value="RIBOSOMAL_L20"/>
    <property type="match status" value="1"/>
</dbReference>
<feature type="chain" id="PRO_0000177279" description="Large ribosomal subunit protein bL20c">
    <location>
        <begin position="1"/>
        <end position="117"/>
    </location>
</feature>
<name>RK20_EUGLO</name>
<gene>
    <name type="primary">rpl20</name>
</gene>
<organism>
    <name type="scientific">Euglena longa</name>
    <name type="common">Euglenophycean alga</name>
    <name type="synonym">Astasia longa</name>
    <dbReference type="NCBI Taxonomy" id="3037"/>
    <lineage>
        <taxon>Eukaryota</taxon>
        <taxon>Discoba</taxon>
        <taxon>Euglenozoa</taxon>
        <taxon>Euglenida</taxon>
        <taxon>Spirocuta</taxon>
        <taxon>Euglenophyceae</taxon>
        <taxon>Euglenales</taxon>
        <taxon>Euglenaceae</taxon>
        <taxon>Euglena</taxon>
    </lineage>
</organism>
<comment type="function">
    <text evidence="1">Binds directly to 23S ribosomal RNA and is necessary for the in vitro assembly process of the 50S ribosomal subunit. It is not involved in the protein synthesizing functions of that subunit (By similarity).</text>
</comment>
<comment type="subcellular location">
    <subcellularLocation>
        <location>Plastid</location>
    </subcellularLocation>
</comment>
<comment type="similarity">
    <text evidence="2">Belongs to the bacterial ribosomal protein bL20 family.</text>
</comment>
<keyword id="KW-0934">Plastid</keyword>
<keyword id="KW-0687">Ribonucleoprotein</keyword>
<keyword id="KW-0689">Ribosomal protein</keyword>
<keyword id="KW-0694">RNA-binding</keyword>
<keyword id="KW-0699">rRNA-binding</keyword>
<evidence type="ECO:0000250" key="1"/>
<evidence type="ECO:0000305" key="2"/>
<sequence length="117" mass="14313">MIRIKDNFKNYKKHKKILKLSKGFIGSNSKIFKISNQKIMKALYFSFSDRKKKKRSNKKIWINRINYFLKNYFFNNFNYNKIINKIKLNKICINKKILSEIIINDYKTIYKLKNMLT</sequence>